<proteinExistence type="inferred from homology"/>
<sequence length="288" mass="31483">MGEFSTLLQQGNGWFFIPSAILLGILHGLEPGHSKTMMAAFIIAIKGTVKQAVMLGLAATLSHTAIVWLIALGGMYLSRAFTAQSVEPWLQLISAIIILSTACWMFWRTWRGEQQWLAGNHHHDHDHGHDHDHDHDHDHDHDHDHDHDHHGHIHPEGATSKAYQDAHERAHAADIQRRFDGQTVTNGQILLFGLTGGLIPCPAAITVLLICIQLKAFTLGATMVLSFSLGLALTLVTVGVGAAISVQQAAKRWSGFSTLARRAPYFSSILIGLVGVYMGIHGYTGIMQ</sequence>
<accession>A9N3J5</accession>
<reference key="1">
    <citation type="submission" date="2007-11" db="EMBL/GenBank/DDBJ databases">
        <authorList>
            <consortium name="The Salmonella enterica serovar Paratyphi B Genome Sequencing Project"/>
            <person name="McClelland M."/>
            <person name="Sanderson E.K."/>
            <person name="Porwollik S."/>
            <person name="Spieth J."/>
            <person name="Clifton W.S."/>
            <person name="Fulton R."/>
            <person name="Cordes M."/>
            <person name="Wollam A."/>
            <person name="Shah N."/>
            <person name="Pepin K."/>
            <person name="Bhonagiri V."/>
            <person name="Nash W."/>
            <person name="Johnson M."/>
            <person name="Thiruvilangam P."/>
            <person name="Wilson R."/>
        </authorList>
    </citation>
    <scope>NUCLEOTIDE SEQUENCE [LARGE SCALE GENOMIC DNA]</scope>
    <source>
        <strain>ATCC BAA-1250 / SPB7</strain>
    </source>
</reference>
<name>RCNA_SALPB</name>
<dbReference type="EMBL" id="CP000886">
    <property type="protein sequence ID" value="ABX69098.1"/>
    <property type="molecule type" value="Genomic_DNA"/>
</dbReference>
<dbReference type="RefSeq" id="WP_000503700.1">
    <property type="nucleotide sequence ID" value="NC_010102.1"/>
</dbReference>
<dbReference type="KEGG" id="spq:SPAB_03765"/>
<dbReference type="PATRIC" id="fig|1016998.12.peg.3545"/>
<dbReference type="HOGENOM" id="CLU_058605_2_0_6"/>
<dbReference type="BioCyc" id="SENT1016998:SPAB_RS15325-MONOMER"/>
<dbReference type="Proteomes" id="UP000008556">
    <property type="component" value="Chromosome"/>
</dbReference>
<dbReference type="GO" id="GO:0005886">
    <property type="term" value="C:plasma membrane"/>
    <property type="evidence" value="ECO:0007669"/>
    <property type="project" value="UniProtKB-SubCell"/>
</dbReference>
<dbReference type="GO" id="GO:0046583">
    <property type="term" value="F:monoatomic cation efflux transmembrane transporter activity"/>
    <property type="evidence" value="ECO:0007669"/>
    <property type="project" value="TreeGrafter"/>
</dbReference>
<dbReference type="GO" id="GO:0015099">
    <property type="term" value="F:nickel cation transmembrane transporter activity"/>
    <property type="evidence" value="ECO:0007669"/>
    <property type="project" value="InterPro"/>
</dbReference>
<dbReference type="GO" id="GO:0006824">
    <property type="term" value="P:cobalt ion transport"/>
    <property type="evidence" value="ECO:0007669"/>
    <property type="project" value="UniProtKB-KW"/>
</dbReference>
<dbReference type="GO" id="GO:0032025">
    <property type="term" value="P:response to cobalt ion"/>
    <property type="evidence" value="ECO:0007669"/>
    <property type="project" value="TreeGrafter"/>
</dbReference>
<dbReference type="GO" id="GO:0010045">
    <property type="term" value="P:response to nickel cation"/>
    <property type="evidence" value="ECO:0007669"/>
    <property type="project" value="TreeGrafter"/>
</dbReference>
<dbReference type="FunFam" id="3.40.50.1980:FF:000080">
    <property type="entry name" value="Nickel/cobalt efflux system"/>
    <property type="match status" value="1"/>
</dbReference>
<dbReference type="Gene3D" id="3.40.50.1980">
    <property type="entry name" value="Nitrogenase molybdenum iron protein domain"/>
    <property type="match status" value="1"/>
</dbReference>
<dbReference type="InterPro" id="IPR011541">
    <property type="entry name" value="Ni/Co_transpt_high_affinity"/>
</dbReference>
<dbReference type="InterPro" id="IPR051224">
    <property type="entry name" value="NiCoT_RcnA"/>
</dbReference>
<dbReference type="NCBIfam" id="NF007454">
    <property type="entry name" value="PRK10019.1"/>
    <property type="match status" value="1"/>
</dbReference>
<dbReference type="PANTHER" id="PTHR40659">
    <property type="entry name" value="NICKEL/COBALT EFFLUX SYSTEM RCNA"/>
    <property type="match status" value="1"/>
</dbReference>
<dbReference type="PANTHER" id="PTHR40659:SF1">
    <property type="entry name" value="NICKEL_COBALT EFFLUX SYSTEM RCNA"/>
    <property type="match status" value="1"/>
</dbReference>
<dbReference type="Pfam" id="PF03824">
    <property type="entry name" value="NicO"/>
    <property type="match status" value="1"/>
</dbReference>
<evidence type="ECO:0000250" key="1"/>
<evidence type="ECO:0000255" key="2"/>
<evidence type="ECO:0000256" key="3">
    <source>
        <dbReference type="SAM" id="MobiDB-lite"/>
    </source>
</evidence>
<evidence type="ECO:0000305" key="4"/>
<gene>
    <name type="primary">rcnA</name>
    <name type="ordered locus">SPAB_03765</name>
</gene>
<feature type="chain" id="PRO_0000333788" description="Nickel/cobalt efflux system RcnA">
    <location>
        <begin position="1"/>
        <end position="288"/>
    </location>
</feature>
<feature type="topological domain" description="Periplasmic" evidence="2">
    <location>
        <begin position="1"/>
        <end position="12"/>
    </location>
</feature>
<feature type="transmembrane region" description="Helical" evidence="2">
    <location>
        <begin position="13"/>
        <end position="33"/>
    </location>
</feature>
<feature type="topological domain" description="Cytoplasmic" evidence="2">
    <location>
        <begin position="34"/>
        <end position="51"/>
    </location>
</feature>
<feature type="transmembrane region" description="Helical" evidence="2">
    <location>
        <begin position="52"/>
        <end position="72"/>
    </location>
</feature>
<feature type="topological domain" description="Periplasmic" evidence="2">
    <location>
        <begin position="73"/>
        <end position="85"/>
    </location>
</feature>
<feature type="transmembrane region" description="Helical" evidence="2">
    <location>
        <begin position="86"/>
        <end position="106"/>
    </location>
</feature>
<feature type="topological domain" description="Cytoplasmic" evidence="2">
    <location>
        <begin position="107"/>
        <end position="188"/>
    </location>
</feature>
<feature type="transmembrane region" description="Helical" evidence="2">
    <location>
        <begin position="189"/>
        <end position="209"/>
    </location>
</feature>
<feature type="topological domain" description="Periplasmic" evidence="2">
    <location>
        <begin position="210"/>
        <end position="223"/>
    </location>
</feature>
<feature type="transmembrane region" description="Helical" evidence="2">
    <location>
        <begin position="224"/>
        <end position="244"/>
    </location>
</feature>
<feature type="topological domain" description="Cytoplasmic" evidence="2">
    <location>
        <begin position="245"/>
        <end position="265"/>
    </location>
</feature>
<feature type="transmembrane region" description="Helical" evidence="2">
    <location>
        <begin position="266"/>
        <end position="286"/>
    </location>
</feature>
<feature type="topological domain" description="Periplasmic" evidence="2">
    <location>
        <begin position="287"/>
        <end position="288"/>
    </location>
</feature>
<feature type="region of interest" description="Disordered" evidence="3">
    <location>
        <begin position="123"/>
        <end position="166"/>
    </location>
</feature>
<feature type="compositionally biased region" description="Basic and acidic residues" evidence="3">
    <location>
        <begin position="123"/>
        <end position="155"/>
    </location>
</feature>
<keyword id="KW-0997">Cell inner membrane</keyword>
<keyword id="KW-1003">Cell membrane</keyword>
<keyword id="KW-0170">Cobalt</keyword>
<keyword id="KW-0171">Cobalt transport</keyword>
<keyword id="KW-0406">Ion transport</keyword>
<keyword id="KW-0472">Membrane</keyword>
<keyword id="KW-0533">Nickel</keyword>
<keyword id="KW-0921">Nickel transport</keyword>
<keyword id="KW-0812">Transmembrane</keyword>
<keyword id="KW-1133">Transmembrane helix</keyword>
<keyword id="KW-0813">Transport</keyword>
<organism>
    <name type="scientific">Salmonella paratyphi B (strain ATCC BAA-1250 / SPB7)</name>
    <dbReference type="NCBI Taxonomy" id="1016998"/>
    <lineage>
        <taxon>Bacteria</taxon>
        <taxon>Pseudomonadati</taxon>
        <taxon>Pseudomonadota</taxon>
        <taxon>Gammaproteobacteria</taxon>
        <taxon>Enterobacterales</taxon>
        <taxon>Enterobacteriaceae</taxon>
        <taxon>Salmonella</taxon>
    </lineage>
</organism>
<protein>
    <recommendedName>
        <fullName>Nickel/cobalt efflux system RcnA</fullName>
    </recommendedName>
</protein>
<comment type="function">
    <text evidence="1">Efflux system for nickel and cobalt.</text>
</comment>
<comment type="subcellular location">
    <subcellularLocation>
        <location evidence="1">Cell inner membrane</location>
        <topology evidence="1">Multi-pass membrane protein</topology>
    </subcellularLocation>
</comment>
<comment type="induction">
    <text evidence="1">By nickel and cobalt. Transcriptionally repressed by RcnR (By similarity).</text>
</comment>
<comment type="similarity">
    <text evidence="4">Belongs to the NiCoT transporter (TC 2.A.52) family. RcnA subfamily.</text>
</comment>